<protein>
    <recommendedName>
        <fullName>Cold shock-like protein CspA</fullName>
    </recommendedName>
</protein>
<keyword id="KW-0010">Activator</keyword>
<keyword id="KW-0963">Cytoplasm</keyword>
<keyword id="KW-0238">DNA-binding</keyword>
<keyword id="KW-0804">Transcription</keyword>
<keyword id="KW-0805">Transcription regulation</keyword>
<sequence>MATNIVGKVKWYNSTKNFGFIEQENGGKDVFVHKSAVDAAGLHSLEEGQYVIFDLEEKQGKAYAVNLRIK</sequence>
<feature type="chain" id="PRO_0000281064" description="Cold shock-like protein CspA">
    <location>
        <begin position="1"/>
        <end position="70"/>
    </location>
</feature>
<feature type="domain" description="CSD">
    <location>
        <begin position="7"/>
        <end position="67"/>
    </location>
</feature>
<evidence type="ECO:0000250" key="1"/>
<name>CSPA_RICFE</name>
<accession>Q4UMU5</accession>
<reference key="1">
    <citation type="journal article" date="2005" name="PLoS Biol.">
        <title>The genome sequence of Rickettsia felis identifies the first putative conjugative plasmid in an obligate intracellular parasite.</title>
        <authorList>
            <person name="Ogata H."/>
            <person name="Renesto P."/>
            <person name="Audic S."/>
            <person name="Robert C."/>
            <person name="Blanc G."/>
            <person name="Fournier P.-E."/>
            <person name="Parinello H."/>
            <person name="Claverie J.-M."/>
            <person name="Raoult D."/>
        </authorList>
    </citation>
    <scope>NUCLEOTIDE SEQUENCE [LARGE SCALE GENOMIC DNA]</scope>
    <source>
        <strain>ATCC VR-1525 / URRWXCal2</strain>
    </source>
</reference>
<dbReference type="EMBL" id="CP000053">
    <property type="protein sequence ID" value="AAY61113.1"/>
    <property type="molecule type" value="Genomic_DNA"/>
</dbReference>
<dbReference type="BMRB" id="Q4UMU5"/>
<dbReference type="SMR" id="Q4UMU5"/>
<dbReference type="STRING" id="315456.RF_0262"/>
<dbReference type="KEGG" id="rfe:RF_0262"/>
<dbReference type="eggNOG" id="COG1278">
    <property type="taxonomic scope" value="Bacteria"/>
</dbReference>
<dbReference type="HOGENOM" id="CLU_117621_4_1_5"/>
<dbReference type="OrthoDB" id="9801074at2"/>
<dbReference type="Proteomes" id="UP000008548">
    <property type="component" value="Chromosome"/>
</dbReference>
<dbReference type="GO" id="GO:0005829">
    <property type="term" value="C:cytosol"/>
    <property type="evidence" value="ECO:0007669"/>
    <property type="project" value="UniProtKB-ARBA"/>
</dbReference>
<dbReference type="GO" id="GO:0003677">
    <property type="term" value="F:DNA binding"/>
    <property type="evidence" value="ECO:0007669"/>
    <property type="project" value="UniProtKB-KW"/>
</dbReference>
<dbReference type="CDD" id="cd04458">
    <property type="entry name" value="CSP_CDS"/>
    <property type="match status" value="1"/>
</dbReference>
<dbReference type="Gene3D" id="2.40.50.140">
    <property type="entry name" value="Nucleic acid-binding proteins"/>
    <property type="match status" value="1"/>
</dbReference>
<dbReference type="InterPro" id="IPR012156">
    <property type="entry name" value="Cold_shock_CspA"/>
</dbReference>
<dbReference type="InterPro" id="IPR050181">
    <property type="entry name" value="Cold_shock_domain"/>
</dbReference>
<dbReference type="InterPro" id="IPR011129">
    <property type="entry name" value="CSD"/>
</dbReference>
<dbReference type="InterPro" id="IPR019844">
    <property type="entry name" value="CSD_CS"/>
</dbReference>
<dbReference type="InterPro" id="IPR002059">
    <property type="entry name" value="CSP_DNA-bd"/>
</dbReference>
<dbReference type="InterPro" id="IPR012340">
    <property type="entry name" value="NA-bd_OB-fold"/>
</dbReference>
<dbReference type="PANTHER" id="PTHR11544">
    <property type="entry name" value="COLD SHOCK DOMAIN CONTAINING PROTEINS"/>
    <property type="match status" value="1"/>
</dbReference>
<dbReference type="Pfam" id="PF00313">
    <property type="entry name" value="CSD"/>
    <property type="match status" value="1"/>
</dbReference>
<dbReference type="PIRSF" id="PIRSF002599">
    <property type="entry name" value="Cold_shock_A"/>
    <property type="match status" value="1"/>
</dbReference>
<dbReference type="PRINTS" id="PR00050">
    <property type="entry name" value="COLDSHOCK"/>
</dbReference>
<dbReference type="SMART" id="SM00357">
    <property type="entry name" value="CSP"/>
    <property type="match status" value="1"/>
</dbReference>
<dbReference type="SUPFAM" id="SSF50249">
    <property type="entry name" value="Nucleic acid-binding proteins"/>
    <property type="match status" value="1"/>
</dbReference>
<dbReference type="PROSITE" id="PS00352">
    <property type="entry name" value="CSD_1"/>
    <property type="match status" value="1"/>
</dbReference>
<dbReference type="PROSITE" id="PS51857">
    <property type="entry name" value="CSD_2"/>
    <property type="match status" value="1"/>
</dbReference>
<comment type="subcellular location">
    <subcellularLocation>
        <location evidence="1">Cytoplasm</location>
    </subcellularLocation>
</comment>
<gene>
    <name type="primary">cspA</name>
    <name type="ordered locus">RF_0262</name>
</gene>
<organism>
    <name type="scientific">Rickettsia felis (strain ATCC VR-1525 / URRWXCal2)</name>
    <name type="common">Rickettsia azadi</name>
    <dbReference type="NCBI Taxonomy" id="315456"/>
    <lineage>
        <taxon>Bacteria</taxon>
        <taxon>Pseudomonadati</taxon>
        <taxon>Pseudomonadota</taxon>
        <taxon>Alphaproteobacteria</taxon>
        <taxon>Rickettsiales</taxon>
        <taxon>Rickettsiaceae</taxon>
        <taxon>Rickettsieae</taxon>
        <taxon>Rickettsia</taxon>
        <taxon>spotted fever group</taxon>
    </lineage>
</organism>
<proteinExistence type="inferred from homology"/>